<feature type="chain" id="PRO_0000436903" description="Large ribosomal subunit protein uL5B" evidence="4">
    <location>
        <begin position="1"/>
        <end position="196"/>
    </location>
</feature>
<sequence length="196" mass="22776">MGDIEKQTEIREKKARNVMRELKIQKLCLNICVGESGDRLTRAAKVLEQLTGQTPVFSKARYTVRTFGIRRNEKIAVHCTVRGPKAEEILEKGLKVKEYELYKENFSDTGNFGFGVQEHIDLGIKYDPSIGIYGMDFYVVLDRAGRRIAKRRRAPGRVGPSHRVEREESIKWFQQKYDGIILPPKPKVKRTFHRRR</sequence>
<dbReference type="EMBL" id="BX284606">
    <property type="protein sequence ID" value="CCD61193.1"/>
    <property type="molecule type" value="Genomic_DNA"/>
</dbReference>
<dbReference type="PIR" id="T29860">
    <property type="entry name" value="T29860"/>
</dbReference>
<dbReference type="RefSeq" id="NP_508413.1">
    <property type="nucleotide sequence ID" value="NM_076012.6"/>
</dbReference>
<dbReference type="PDB" id="9BH5">
    <property type="method" value="EM"/>
    <property type="resolution" value="2.63 A"/>
    <property type="chains" value="CJ=1-196"/>
</dbReference>
<dbReference type="PDB" id="9CAI">
    <property type="method" value="EM"/>
    <property type="resolution" value="2.59 A"/>
    <property type="chains" value="CJ=1-196"/>
</dbReference>
<dbReference type="PDBsum" id="9BH5"/>
<dbReference type="PDBsum" id="9CAI"/>
<dbReference type="EMDB" id="EMD-44533"/>
<dbReference type="EMDB" id="EMD-45392"/>
<dbReference type="SMR" id="Q19162"/>
<dbReference type="DIP" id="DIP-26065N"/>
<dbReference type="FunCoup" id="Q19162">
    <property type="interactions" value="1703"/>
</dbReference>
<dbReference type="STRING" id="6239.F07D10.1.1"/>
<dbReference type="PaxDb" id="6239-F07D10.1"/>
<dbReference type="PeptideAtlas" id="Q19162"/>
<dbReference type="EnsemblMetazoa" id="F07D10.1.1">
    <property type="protein sequence ID" value="F07D10.1.1"/>
    <property type="gene ID" value="WBGene00004423"/>
</dbReference>
<dbReference type="GeneID" id="180535"/>
<dbReference type="KEGG" id="cel:CELE_F07D10.1"/>
<dbReference type="UCSC" id="F07D10.1.1">
    <property type="organism name" value="c. elegans"/>
</dbReference>
<dbReference type="AGR" id="WB:WBGene00004423"/>
<dbReference type="CTD" id="180535"/>
<dbReference type="WormBase" id="F07D10.1">
    <property type="protein sequence ID" value="CE07033"/>
    <property type="gene ID" value="WBGene00004423"/>
    <property type="gene designation" value="rpl-11.2"/>
</dbReference>
<dbReference type="eggNOG" id="KOG0397">
    <property type="taxonomic scope" value="Eukaryota"/>
</dbReference>
<dbReference type="GeneTree" id="ENSGT00910000144211"/>
<dbReference type="HOGENOM" id="CLU_061015_3_0_1"/>
<dbReference type="InParanoid" id="Q19162"/>
<dbReference type="OMA" id="NPMKELK"/>
<dbReference type="OrthoDB" id="1734943at2759"/>
<dbReference type="PhylomeDB" id="Q19162"/>
<dbReference type="Reactome" id="R-CEL-156827">
    <property type="pathway name" value="L13a-mediated translational silencing of Ceruloplasmin expression"/>
</dbReference>
<dbReference type="Reactome" id="R-CEL-1799339">
    <property type="pathway name" value="SRP-dependent cotranslational protein targeting to membrane"/>
</dbReference>
<dbReference type="Reactome" id="R-CEL-72689">
    <property type="pathway name" value="Formation of a pool of free 40S subunits"/>
</dbReference>
<dbReference type="Reactome" id="R-CEL-72706">
    <property type="pathway name" value="GTP hydrolysis and joining of the 60S ribosomal subunit"/>
</dbReference>
<dbReference type="Reactome" id="R-CEL-975956">
    <property type="pathway name" value="Nonsense Mediated Decay (NMD) independent of the Exon Junction Complex (EJC)"/>
</dbReference>
<dbReference type="Reactome" id="R-CEL-975957">
    <property type="pathway name" value="Nonsense Mediated Decay (NMD) enhanced by the Exon Junction Complex (EJC)"/>
</dbReference>
<dbReference type="PRO" id="PR:Q19162"/>
<dbReference type="Proteomes" id="UP000001940">
    <property type="component" value="Chromosome X"/>
</dbReference>
<dbReference type="Bgee" id="WBGene00004423">
    <property type="expression patterns" value="Expressed in larva and 6 other cell types or tissues"/>
</dbReference>
<dbReference type="GO" id="GO:0022625">
    <property type="term" value="C:cytosolic large ribosomal subunit"/>
    <property type="evidence" value="ECO:0000318"/>
    <property type="project" value="GO_Central"/>
</dbReference>
<dbReference type="GO" id="GO:0005634">
    <property type="term" value="C:nucleus"/>
    <property type="evidence" value="ECO:0007669"/>
    <property type="project" value="UniProtKB-SubCell"/>
</dbReference>
<dbReference type="GO" id="GO:0003723">
    <property type="term" value="F:RNA binding"/>
    <property type="evidence" value="ECO:0000318"/>
    <property type="project" value="GO_Central"/>
</dbReference>
<dbReference type="GO" id="GO:0019843">
    <property type="term" value="F:rRNA binding"/>
    <property type="evidence" value="ECO:0007669"/>
    <property type="project" value="UniProtKB-KW"/>
</dbReference>
<dbReference type="GO" id="GO:0003735">
    <property type="term" value="F:structural constituent of ribosome"/>
    <property type="evidence" value="ECO:0000318"/>
    <property type="project" value="GO_Central"/>
</dbReference>
<dbReference type="GO" id="GO:0006412">
    <property type="term" value="P:translation"/>
    <property type="evidence" value="ECO:0000318"/>
    <property type="project" value="GO_Central"/>
</dbReference>
<dbReference type="FunFam" id="3.30.1440.10:FF:000004">
    <property type="entry name" value="60S ribosomal protein L11, putative"/>
    <property type="match status" value="1"/>
</dbReference>
<dbReference type="Gene3D" id="3.30.1440.10">
    <property type="match status" value="1"/>
</dbReference>
<dbReference type="InterPro" id="IPR002132">
    <property type="entry name" value="Ribosomal_uL5"/>
</dbReference>
<dbReference type="InterPro" id="IPR031309">
    <property type="entry name" value="Ribosomal_uL5_C"/>
</dbReference>
<dbReference type="InterPro" id="IPR020929">
    <property type="entry name" value="Ribosomal_uL5_CS"/>
</dbReference>
<dbReference type="InterPro" id="IPR022803">
    <property type="entry name" value="Ribosomal_uL5_dom_sf"/>
</dbReference>
<dbReference type="InterPro" id="IPR031310">
    <property type="entry name" value="Ribosomal_uL5_N"/>
</dbReference>
<dbReference type="NCBIfam" id="NF003258">
    <property type="entry name" value="PRK04219.1"/>
    <property type="match status" value="1"/>
</dbReference>
<dbReference type="PANTHER" id="PTHR11994">
    <property type="entry name" value="60S RIBOSOMAL PROTEIN L11-RELATED"/>
    <property type="match status" value="1"/>
</dbReference>
<dbReference type="Pfam" id="PF00281">
    <property type="entry name" value="Ribosomal_L5"/>
    <property type="match status" value="1"/>
</dbReference>
<dbReference type="Pfam" id="PF00673">
    <property type="entry name" value="Ribosomal_L5_C"/>
    <property type="match status" value="1"/>
</dbReference>
<dbReference type="PIRSF" id="PIRSF002161">
    <property type="entry name" value="Ribosomal_L5"/>
    <property type="match status" value="1"/>
</dbReference>
<dbReference type="SUPFAM" id="SSF55282">
    <property type="entry name" value="RL5-like"/>
    <property type="match status" value="1"/>
</dbReference>
<dbReference type="PROSITE" id="PS00358">
    <property type="entry name" value="RIBOSOMAL_L5"/>
    <property type="match status" value="1"/>
</dbReference>
<comment type="function">
    <text evidence="1">Component of the ribosome, a large ribonucleoprotein complex responsible for the synthesis of proteins in the cell. The small ribosomal subunit (SSU) binds messenger RNAs (mRNAs) and translates the encoded message by selecting cognate aminoacyl-transfer RNA (tRNA) molecules. The large subunit (LSU) contains the ribosomal catalytic site termed the peptidyl transferase center (PTC), which catalyzes the formation of peptide bonds, thereby polymerizing the amino acids delivered by tRNAs into a polypeptide chain. The nascent polypeptides leave the ribosome through a tunnel in the LSU and interact with protein factors that function in enzymatic processing, targeting, and the membrane insertion of nascent chains at the exit of the ribosomal tunnel.</text>
</comment>
<comment type="subunit">
    <text evidence="1">Component of the large ribosomal subunit.</text>
</comment>
<comment type="subcellular location">
    <subcellularLocation>
        <location evidence="1">Nucleus</location>
    </subcellularLocation>
    <subcellularLocation>
        <location evidence="1">Cytoplasm</location>
    </subcellularLocation>
</comment>
<comment type="disruption phenotype">
    <text evidence="3">RNAi-mediated knockdown results in a growth defect.</text>
</comment>
<comment type="miscellaneous">
    <text evidence="5">There's a functional difference between the two L11-encoding proteins in C.elegans. rpl-11.1 plays a role in the germline whereas rpl-11.2 has a somatic function.</text>
</comment>
<comment type="similarity">
    <text evidence="2">Belongs to the universal ribosomal protein uL5 family.</text>
</comment>
<gene>
    <name evidence="7" type="primary">rpl-11.2</name>
    <name evidence="7" type="ORF">F07D10.1</name>
</gene>
<organism evidence="6">
    <name type="scientific">Caenorhabditis elegans</name>
    <dbReference type="NCBI Taxonomy" id="6239"/>
    <lineage>
        <taxon>Eukaryota</taxon>
        <taxon>Metazoa</taxon>
        <taxon>Ecdysozoa</taxon>
        <taxon>Nematoda</taxon>
        <taxon>Chromadorea</taxon>
        <taxon>Rhabditida</taxon>
        <taxon>Rhabditina</taxon>
        <taxon>Rhabditomorpha</taxon>
        <taxon>Rhabditoidea</taxon>
        <taxon>Rhabditidae</taxon>
        <taxon>Peloderinae</taxon>
        <taxon>Caenorhabditis</taxon>
    </lineage>
</organism>
<protein>
    <recommendedName>
        <fullName evidence="4">Large ribosomal subunit protein uL5B</fullName>
    </recommendedName>
    <alternativeName>
        <fullName evidence="4">60S ribosomal protein L11-2</fullName>
    </alternativeName>
</protein>
<proteinExistence type="evidence at protein level"/>
<reference evidence="6" key="1">
    <citation type="journal article" date="1998" name="Science">
        <title>Genome sequence of the nematode C. elegans: a platform for investigating biology.</title>
        <authorList>
            <consortium name="The C. elegans sequencing consortium"/>
        </authorList>
    </citation>
    <scope>NUCLEOTIDE SEQUENCE [LARGE SCALE GENOMIC DNA]</scope>
    <source>
        <strain evidence="6">Bristol N2</strain>
    </source>
</reference>
<reference evidence="4" key="2">
    <citation type="journal article" date="2005" name="Genetics">
        <title>Autosomal genes of autosomal/X-linked duplicated gene pairs and germ-line proliferation in Caenorhabditis elegans.</title>
        <authorList>
            <person name="Maciejowski J."/>
            <person name="Ahn J.H."/>
            <person name="Cipriani P.G."/>
            <person name="Killian D.J."/>
            <person name="Chaudhary A.L."/>
            <person name="Lee J.I."/>
            <person name="Voutev R."/>
            <person name="Johnsen R.C."/>
            <person name="Baillie D.L."/>
            <person name="Gunsalus K.C."/>
            <person name="Fitch D.H."/>
            <person name="Hubbard E.J."/>
        </authorList>
    </citation>
    <scope>DISRUPTION PHENOTYPE</scope>
</reference>
<evidence type="ECO:0000250" key="1">
    <source>
        <dbReference type="UniProtKB" id="P0C0W9"/>
    </source>
</evidence>
<evidence type="ECO:0000255" key="2">
    <source>
        <dbReference type="RuleBase" id="RU003930"/>
    </source>
</evidence>
<evidence type="ECO:0000269" key="3">
    <source>
    </source>
</evidence>
<evidence type="ECO:0000305" key="4"/>
<evidence type="ECO:0000305" key="5">
    <source>
    </source>
</evidence>
<evidence type="ECO:0000312" key="6">
    <source>
        <dbReference type="Proteomes" id="UP000001940"/>
    </source>
</evidence>
<evidence type="ECO:0000312" key="7">
    <source>
        <dbReference type="WormBase" id="F07D10.1"/>
    </source>
</evidence>
<keyword id="KW-0002">3D-structure</keyword>
<keyword id="KW-0963">Cytoplasm</keyword>
<keyword id="KW-0539">Nucleus</keyword>
<keyword id="KW-1185">Reference proteome</keyword>
<keyword id="KW-0687">Ribonucleoprotein</keyword>
<keyword id="KW-0689">Ribosomal protein</keyword>
<keyword id="KW-0694">RNA-binding</keyword>
<keyword id="KW-0699">rRNA-binding</keyword>
<name>RL112_CAEEL</name>
<accession>Q19162</accession>